<feature type="signal peptide" evidence="2">
    <location>
        <begin position="1"/>
        <end position="21"/>
    </location>
</feature>
<feature type="propeptide" id="PRO_0000012756" description="Removed for receptor activation" evidence="1">
    <location>
        <begin position="22"/>
        <end position="38"/>
    </location>
</feature>
<feature type="chain" id="PRO_0000012757" description="Proteinase-activated receptor 3">
    <location>
        <begin position="39"/>
        <end position="374"/>
    </location>
</feature>
<feature type="topological domain" description="Extracellular" evidence="2">
    <location>
        <begin position="39"/>
        <end position="94"/>
    </location>
</feature>
<feature type="transmembrane region" description="Helical; Name=1" evidence="2">
    <location>
        <begin position="95"/>
        <end position="120"/>
    </location>
</feature>
<feature type="topological domain" description="Cytoplasmic" evidence="2">
    <location>
        <begin position="121"/>
        <end position="128"/>
    </location>
</feature>
<feature type="transmembrane region" description="Helical; Name=2" evidence="2">
    <location>
        <begin position="129"/>
        <end position="148"/>
    </location>
</feature>
<feature type="topological domain" description="Extracellular" evidence="2">
    <location>
        <begin position="149"/>
        <end position="167"/>
    </location>
</feature>
<feature type="transmembrane region" description="Helical; Name=3" evidence="2">
    <location>
        <begin position="168"/>
        <end position="189"/>
    </location>
</feature>
<feature type="topological domain" description="Cytoplasmic" evidence="2">
    <location>
        <begin position="190"/>
        <end position="206"/>
    </location>
</feature>
<feature type="transmembrane region" description="Helical; Name=4" evidence="2">
    <location>
        <begin position="207"/>
        <end position="230"/>
    </location>
</feature>
<feature type="topological domain" description="Extracellular" evidence="2">
    <location>
        <begin position="231"/>
        <end position="260"/>
    </location>
</feature>
<feature type="transmembrane region" description="Helical; Name=5" evidence="2">
    <location>
        <begin position="261"/>
        <end position="280"/>
    </location>
</feature>
<feature type="topological domain" description="Cytoplasmic" evidence="2">
    <location>
        <begin position="281"/>
        <end position="297"/>
    </location>
</feature>
<feature type="transmembrane region" description="Helical; Name=6" evidence="2">
    <location>
        <begin position="298"/>
        <end position="322"/>
    </location>
</feature>
<feature type="topological domain" description="Extracellular" evidence="2">
    <location>
        <begin position="323"/>
        <end position="336"/>
    </location>
</feature>
<feature type="transmembrane region" description="Helical; Name=7" evidence="2">
    <location>
        <begin position="337"/>
        <end position="361"/>
    </location>
</feature>
<feature type="topological domain" description="Cytoplasmic" evidence="2">
    <location>
        <begin position="362"/>
        <end position="374"/>
    </location>
</feature>
<feature type="site" description="Cleavage; by thrombin" evidence="1">
    <location>
        <begin position="38"/>
        <end position="39"/>
    </location>
</feature>
<feature type="glycosylation site" description="N-linked (GlcNAc...) asparagine" evidence="2">
    <location>
        <position position="25"/>
    </location>
</feature>
<feature type="glycosylation site" description="N-linked (GlcNAc...) asparagine" evidence="2">
    <location>
        <position position="82"/>
    </location>
</feature>
<feature type="glycosylation site" description="N-linked (GlcNAc...) asparagine" evidence="2">
    <location>
        <position position="331"/>
    </location>
</feature>
<feature type="disulfide bond" evidence="3">
    <location>
        <begin position="166"/>
        <end position="245"/>
    </location>
</feature>
<feature type="splice variant" id="VSP_045116" description="In isoform 2." evidence="9">
    <location>
        <begin position="1"/>
        <end position="22"/>
    </location>
</feature>
<feature type="sequence variant" id="VAR_012849" description="In dbSNP:rs2069649." evidence="8">
    <original>L</original>
    <variation>S</variation>
    <location>
        <position position="15"/>
    </location>
</feature>
<feature type="sequence variant" id="VAR_012850" description="In dbSNP:rs2069700." evidence="8">
    <original>M</original>
    <variation>V</variation>
    <location>
        <position position="177"/>
    </location>
</feature>
<feature type="sequence variant" id="VAR_012851" description="In dbSNP:rs2069683." evidence="8">
    <original>N</original>
    <variation>D</variation>
    <location>
        <position position="250"/>
    </location>
</feature>
<feature type="mutagenesis site" description="No proteolytic cleavage by thrombin." evidence="6">
    <original>T</original>
    <variation>P</variation>
    <location>
        <position position="39"/>
    </location>
</feature>
<feature type="mutagenesis site" description="Altered signal upon thrombin cleavage." evidence="6">
    <original>F</original>
    <variation>A</variation>
    <location>
        <position position="40"/>
    </location>
</feature>
<keyword id="KW-0025">Alternative splicing</keyword>
<keyword id="KW-0094">Blood coagulation</keyword>
<keyword id="KW-1003">Cell membrane</keyword>
<keyword id="KW-1015">Disulfide bond</keyword>
<keyword id="KW-0297">G-protein coupled receptor</keyword>
<keyword id="KW-0325">Glycoprotein</keyword>
<keyword id="KW-0356">Hemostasis</keyword>
<keyword id="KW-0472">Membrane</keyword>
<keyword id="KW-1267">Proteomics identification</keyword>
<keyword id="KW-0675">Receptor</keyword>
<keyword id="KW-1185">Reference proteome</keyword>
<keyword id="KW-0732">Signal</keyword>
<keyword id="KW-0807">Transducer</keyword>
<keyword id="KW-0812">Transmembrane</keyword>
<keyword id="KW-1133">Transmembrane helix</keyword>
<sequence>MKALIFAAAGLLLLLPTFCQSGMENDTNNLAKPTLPIKTFRGAPPNSFEEFPFSALEGWTGATITVKIKCPEESASHLHVKNATMGYLTSSLSTKLIPAIYLLVFVVGVPANAVTLWMLFFRTRSICTTVFYTNLAIADFLFCVTLPFKIAYHLNGNNWVFGEVLCRATTVIFYGNMYCSILLLACISINRYLAIVHPFTYRGLPKHTYALVTCGLVWATVFLYMLPFFILKQEYYLVQPDITTCHDVHNTCESSSPFQLYYFISLAFFGFLIPFVLIIYCYAAIIRTLNAYDHRWLWYVKASLLILVIFTICFAPSNIILIIHHANYYYNNTDGLYFIYLIALCLGSLNSCLDPFLYFLMSKTRNHSTAYLTK</sequence>
<dbReference type="EMBL" id="U92971">
    <property type="protein sequence ID" value="AAC51218.1"/>
    <property type="molecule type" value="mRNA"/>
</dbReference>
<dbReference type="EMBL" id="AK312848">
    <property type="protein sequence ID" value="BAG35701.1"/>
    <property type="molecule type" value="mRNA"/>
</dbReference>
<dbReference type="EMBL" id="AK298585">
    <property type="protein sequence ID" value="BAG60775.1"/>
    <property type="molecule type" value="mRNA"/>
</dbReference>
<dbReference type="EMBL" id="BX537386">
    <property type="protein sequence ID" value="CAD97628.1"/>
    <property type="status" value="ALT_FRAME"/>
    <property type="molecule type" value="mRNA"/>
</dbReference>
<dbReference type="EMBL" id="AF374726">
    <property type="protein sequence ID" value="AAK51564.1"/>
    <property type="molecule type" value="Genomic_DNA"/>
</dbReference>
<dbReference type="EMBL" id="AC026725">
    <property type="status" value="NOT_ANNOTATED_CDS"/>
    <property type="molecule type" value="Genomic_DNA"/>
</dbReference>
<dbReference type="EMBL" id="CH471084">
    <property type="protein sequence ID" value="EAW95778.1"/>
    <property type="molecule type" value="Genomic_DNA"/>
</dbReference>
<dbReference type="EMBL" id="BC093648">
    <property type="protein sequence ID" value="AAH93648.1"/>
    <property type="molecule type" value="mRNA"/>
</dbReference>
<dbReference type="EMBL" id="BC093650">
    <property type="protein sequence ID" value="AAH93650.1"/>
    <property type="molecule type" value="mRNA"/>
</dbReference>
<dbReference type="CCDS" id="CCDS4031.1">
    <molecule id="O00254-1"/>
</dbReference>
<dbReference type="CCDS" id="CCDS58959.1">
    <molecule id="O00254-2"/>
</dbReference>
<dbReference type="RefSeq" id="NP_001243495.1">
    <molecule id="O00254-2"/>
    <property type="nucleotide sequence ID" value="NM_001256566.2"/>
</dbReference>
<dbReference type="RefSeq" id="NP_004092.1">
    <molecule id="O00254-1"/>
    <property type="nucleotide sequence ID" value="NM_004101.4"/>
</dbReference>
<dbReference type="SMR" id="O00254"/>
<dbReference type="BioGRID" id="108450">
    <property type="interactions" value="6"/>
</dbReference>
<dbReference type="CORUM" id="O00254"/>
<dbReference type="DIP" id="DIP-44337N"/>
<dbReference type="FunCoup" id="O00254">
    <property type="interactions" value="646"/>
</dbReference>
<dbReference type="IntAct" id="O00254">
    <property type="interactions" value="10"/>
</dbReference>
<dbReference type="MINT" id="O00254"/>
<dbReference type="STRING" id="9606.ENSP00000296641"/>
<dbReference type="ChEMBL" id="CHEMBL5477"/>
<dbReference type="GlyCosmos" id="O00254">
    <property type="glycosylation" value="3 sites, No reported glycans"/>
</dbReference>
<dbReference type="GlyGen" id="O00254">
    <property type="glycosylation" value="3 sites"/>
</dbReference>
<dbReference type="iPTMnet" id="O00254"/>
<dbReference type="PhosphoSitePlus" id="O00254"/>
<dbReference type="BioMuta" id="F2RL2"/>
<dbReference type="PaxDb" id="9606-ENSP00000296641"/>
<dbReference type="PeptideAtlas" id="O00254"/>
<dbReference type="ProteomicsDB" id="47807">
    <molecule id="O00254-1"/>
</dbReference>
<dbReference type="ProteomicsDB" id="4833"/>
<dbReference type="Antibodypedia" id="12465">
    <property type="antibodies" value="178 antibodies from 28 providers"/>
</dbReference>
<dbReference type="DNASU" id="2151"/>
<dbReference type="Ensembl" id="ENST00000296641.5">
    <molecule id="O00254-1"/>
    <property type="protein sequence ID" value="ENSP00000296641.3"/>
    <property type="gene ID" value="ENSG00000164220.7"/>
</dbReference>
<dbReference type="Ensembl" id="ENST00000504899.1">
    <molecule id="O00254-2"/>
    <property type="protein sequence ID" value="ENSP00000426703.1"/>
    <property type="gene ID" value="ENSG00000164220.7"/>
</dbReference>
<dbReference type="GeneID" id="2151"/>
<dbReference type="KEGG" id="hsa:2151"/>
<dbReference type="MANE-Select" id="ENST00000296641.5">
    <property type="protein sequence ID" value="ENSP00000296641.3"/>
    <property type="RefSeq nucleotide sequence ID" value="NM_004101.4"/>
    <property type="RefSeq protein sequence ID" value="NP_004092.1"/>
</dbReference>
<dbReference type="UCSC" id="uc003kem.4">
    <molecule id="O00254-1"/>
    <property type="organism name" value="human"/>
</dbReference>
<dbReference type="AGR" id="HGNC:3539"/>
<dbReference type="CTD" id="2151"/>
<dbReference type="DisGeNET" id="2151"/>
<dbReference type="GeneCards" id="F2RL2"/>
<dbReference type="HGNC" id="HGNC:3539">
    <property type="gene designation" value="F2RL2"/>
</dbReference>
<dbReference type="HPA" id="ENSG00000164220">
    <property type="expression patterns" value="Tissue enhanced (gallbladder)"/>
</dbReference>
<dbReference type="MIM" id="601919">
    <property type="type" value="gene"/>
</dbReference>
<dbReference type="neXtProt" id="NX_O00254"/>
<dbReference type="OpenTargets" id="ENSG00000164220"/>
<dbReference type="PharmGKB" id="PA27948"/>
<dbReference type="VEuPathDB" id="HostDB:ENSG00000164220"/>
<dbReference type="eggNOG" id="ENOG502QWI1">
    <property type="taxonomic scope" value="Eukaryota"/>
</dbReference>
<dbReference type="GeneTree" id="ENSGT01050000244840"/>
<dbReference type="HOGENOM" id="CLU_009579_8_2_1"/>
<dbReference type="InParanoid" id="O00254"/>
<dbReference type="OMA" id="VVFYGNM"/>
<dbReference type="OrthoDB" id="8859266at2759"/>
<dbReference type="PAN-GO" id="O00254">
    <property type="GO annotations" value="4 GO annotations based on evolutionary models"/>
</dbReference>
<dbReference type="PhylomeDB" id="O00254"/>
<dbReference type="TreeFam" id="TF330775"/>
<dbReference type="PathwayCommons" id="O00254"/>
<dbReference type="Reactome" id="R-HSA-375276">
    <property type="pathway name" value="Peptide ligand-binding receptors"/>
</dbReference>
<dbReference type="Reactome" id="R-HSA-416476">
    <property type="pathway name" value="G alpha (q) signalling events"/>
</dbReference>
<dbReference type="Reactome" id="R-HSA-456926">
    <property type="pathway name" value="Thrombin signalling through proteinase activated receptors (PARs)"/>
</dbReference>
<dbReference type="SignaLink" id="O00254"/>
<dbReference type="SIGNOR" id="O00254"/>
<dbReference type="BioGRID-ORCS" id="2151">
    <property type="hits" value="9 hits in 1137 CRISPR screens"/>
</dbReference>
<dbReference type="GeneWiki" id="F2RL2"/>
<dbReference type="GenomeRNAi" id="2151"/>
<dbReference type="Pharos" id="O00254">
    <property type="development level" value="Tbio"/>
</dbReference>
<dbReference type="PRO" id="PR:O00254"/>
<dbReference type="Proteomes" id="UP000005640">
    <property type="component" value="Chromosome 5"/>
</dbReference>
<dbReference type="RNAct" id="O00254">
    <property type="molecule type" value="protein"/>
</dbReference>
<dbReference type="Bgee" id="ENSG00000164220">
    <property type="expression patterns" value="Expressed in stromal cell of endometrium and 97 other cell types or tissues"/>
</dbReference>
<dbReference type="GO" id="GO:0016324">
    <property type="term" value="C:apical plasma membrane"/>
    <property type="evidence" value="ECO:0007669"/>
    <property type="project" value="Ensembl"/>
</dbReference>
<dbReference type="GO" id="GO:0005576">
    <property type="term" value="C:extracellular region"/>
    <property type="evidence" value="ECO:0000304"/>
    <property type="project" value="Reactome"/>
</dbReference>
<dbReference type="GO" id="GO:0005886">
    <property type="term" value="C:plasma membrane"/>
    <property type="evidence" value="ECO:0000318"/>
    <property type="project" value="GO_Central"/>
</dbReference>
<dbReference type="GO" id="GO:0032991">
    <property type="term" value="C:protein-containing complex"/>
    <property type="evidence" value="ECO:0000314"/>
    <property type="project" value="UniProtKB"/>
</dbReference>
<dbReference type="GO" id="GO:0004930">
    <property type="term" value="F:G protein-coupled receptor activity"/>
    <property type="evidence" value="ECO:0000318"/>
    <property type="project" value="GO_Central"/>
</dbReference>
<dbReference type="GO" id="GO:0004435">
    <property type="term" value="F:phosphatidylinositol-4,5-bisphosphate phospholipase C activity"/>
    <property type="evidence" value="ECO:0000304"/>
    <property type="project" value="ProtInc"/>
</dbReference>
<dbReference type="GO" id="GO:0048018">
    <property type="term" value="F:receptor ligand activity"/>
    <property type="evidence" value="ECO:0007669"/>
    <property type="project" value="Ensembl"/>
</dbReference>
<dbReference type="GO" id="GO:0015057">
    <property type="term" value="F:thrombin-activated receptor activity"/>
    <property type="evidence" value="ECO:0000304"/>
    <property type="project" value="ProtInc"/>
</dbReference>
<dbReference type="GO" id="GO:0007596">
    <property type="term" value="P:blood coagulation"/>
    <property type="evidence" value="ECO:0000304"/>
    <property type="project" value="ProtInc"/>
</dbReference>
<dbReference type="GO" id="GO:0007186">
    <property type="term" value="P:G protein-coupled receptor signaling pathway"/>
    <property type="evidence" value="ECO:0000318"/>
    <property type="project" value="GO_Central"/>
</dbReference>
<dbReference type="GO" id="GO:1990806">
    <property type="term" value="P:ligand-gated ion channel signaling pathway"/>
    <property type="evidence" value="ECO:0007669"/>
    <property type="project" value="Ensembl"/>
</dbReference>
<dbReference type="GO" id="GO:0030168">
    <property type="term" value="P:platelet activation"/>
    <property type="evidence" value="ECO:0000304"/>
    <property type="project" value="Reactome"/>
</dbReference>
<dbReference type="GO" id="GO:0032024">
    <property type="term" value="P:positive regulation of insulin secretion"/>
    <property type="evidence" value="ECO:0007669"/>
    <property type="project" value="Ensembl"/>
</dbReference>
<dbReference type="GO" id="GO:0009611">
    <property type="term" value="P:response to wounding"/>
    <property type="evidence" value="ECO:0000304"/>
    <property type="project" value="ProtInc"/>
</dbReference>
<dbReference type="CDD" id="cd15371">
    <property type="entry name" value="7tmA_PAR3"/>
    <property type="match status" value="1"/>
</dbReference>
<dbReference type="FunFam" id="1.20.1070.10:FF:000040">
    <property type="entry name" value="Coagulation factor 2 (thrombin) receptor"/>
    <property type="match status" value="1"/>
</dbReference>
<dbReference type="Gene3D" id="1.20.1070.10">
    <property type="entry name" value="Rhodopsin 7-helix transmembrane proteins"/>
    <property type="match status" value="1"/>
</dbReference>
<dbReference type="InterPro" id="IPR000276">
    <property type="entry name" value="GPCR_Rhodpsn"/>
</dbReference>
<dbReference type="InterPro" id="IPR017452">
    <property type="entry name" value="GPCR_Rhodpsn_7TM"/>
</dbReference>
<dbReference type="InterPro" id="IPR003943">
    <property type="entry name" value="Prot_act_rcpt_3"/>
</dbReference>
<dbReference type="InterPro" id="IPR003912">
    <property type="entry name" value="Protea_act_rcpt"/>
</dbReference>
<dbReference type="PANTHER" id="PTHR24232">
    <property type="entry name" value="G-PROTEIN COUPLED RECEPTOR"/>
    <property type="match status" value="1"/>
</dbReference>
<dbReference type="PANTHER" id="PTHR24232:SF0">
    <property type="entry name" value="PROTEINASE-ACTIVATED RECEPTOR 3"/>
    <property type="match status" value="1"/>
</dbReference>
<dbReference type="Pfam" id="PF00001">
    <property type="entry name" value="7tm_1"/>
    <property type="match status" value="1"/>
</dbReference>
<dbReference type="PRINTS" id="PR00237">
    <property type="entry name" value="GPCRRHODOPSN"/>
</dbReference>
<dbReference type="PRINTS" id="PR01428">
    <property type="entry name" value="PROTEASEAR"/>
</dbReference>
<dbReference type="PRINTS" id="PR01429">
    <property type="entry name" value="PROTEASEAR3"/>
</dbReference>
<dbReference type="SUPFAM" id="SSF81321">
    <property type="entry name" value="Family A G protein-coupled receptor-like"/>
    <property type="match status" value="1"/>
</dbReference>
<dbReference type="PROSITE" id="PS00237">
    <property type="entry name" value="G_PROTEIN_RECEP_F1_1"/>
    <property type="match status" value="1"/>
</dbReference>
<dbReference type="PROSITE" id="PS50262">
    <property type="entry name" value="G_PROTEIN_RECEP_F1_2"/>
    <property type="match status" value="1"/>
</dbReference>
<proteinExistence type="evidence at protein level"/>
<comment type="function">
    <text evidence="4">Receptor for activated thrombin coupled to G proteins that stimulate phosphoinositide hydrolysis.</text>
</comment>
<comment type="subunit">
    <text evidence="5">Interacts with INSC/inscuteable and probably GPSM2.</text>
</comment>
<comment type="interaction">
    <interactant intactId="EBI-1751853">
        <id>O00254</id>
    </interactant>
    <interactant intactId="EBI-389883">
        <id>P16333</id>
        <label>NCK1</label>
    </interactant>
    <organismsDiffer>false</organismsDiffer>
    <experiments>2</experiments>
</comment>
<comment type="subcellular location">
    <subcellularLocation>
        <location>Cell membrane</location>
        <topology>Multi-pass membrane protein</topology>
    </subcellularLocation>
</comment>
<comment type="alternative products">
    <event type="alternative splicing"/>
    <isoform>
        <id>O00254-1</id>
        <name>1</name>
        <sequence type="displayed"/>
    </isoform>
    <isoform>
        <id>O00254-2</id>
        <name>2</name>
        <sequence type="described" ref="VSP_045116"/>
    </isoform>
</comment>
<comment type="tissue specificity">
    <text evidence="7">Highest expression in the megakaryocytes of the bone marrow, lower in mature megakaryocytes, in platelets and in a variety of other tissues such as heart and gut.</text>
</comment>
<comment type="PTM">
    <text>A proteolytic cleavage generates a new N-terminus that functions as a tethered ligand.</text>
</comment>
<comment type="similarity">
    <text evidence="3">Belongs to the G-protein coupled receptor 1 family.</text>
</comment>
<comment type="sequence caution" evidence="10">
    <conflict type="frameshift">
        <sequence resource="EMBL-CDS" id="CAD97628"/>
    </conflict>
</comment>
<organism>
    <name type="scientific">Homo sapiens</name>
    <name type="common">Human</name>
    <dbReference type="NCBI Taxonomy" id="9606"/>
    <lineage>
        <taxon>Eukaryota</taxon>
        <taxon>Metazoa</taxon>
        <taxon>Chordata</taxon>
        <taxon>Craniata</taxon>
        <taxon>Vertebrata</taxon>
        <taxon>Euteleostomi</taxon>
        <taxon>Mammalia</taxon>
        <taxon>Eutheria</taxon>
        <taxon>Euarchontoglires</taxon>
        <taxon>Primates</taxon>
        <taxon>Haplorrhini</taxon>
        <taxon>Catarrhini</taxon>
        <taxon>Hominidae</taxon>
        <taxon>Homo</taxon>
    </lineage>
</organism>
<reference key="1">
    <citation type="journal article" date="1997" name="Nature">
        <title>Protease-activated receptor 3 is a second thrombin receptor in humans.</title>
        <authorList>
            <person name="Ishihara H."/>
            <person name="Connolly A.J."/>
            <person name="Zeng D."/>
            <person name="Kahn M.L."/>
            <person name="Zheng Y.-W."/>
            <person name="Timmons C."/>
            <person name="Tram T."/>
            <person name="Coughlin S.R."/>
        </authorList>
    </citation>
    <scope>NUCLEOTIDE SEQUENCE [MRNA] (ISOFORM 1)</scope>
    <scope>MUTAGENESIS OF THR-39 AND PHE-40</scope>
</reference>
<reference key="2">
    <citation type="journal article" date="2004" name="Nat. Genet.">
        <title>Complete sequencing and characterization of 21,243 full-length human cDNAs.</title>
        <authorList>
            <person name="Ota T."/>
            <person name="Suzuki Y."/>
            <person name="Nishikawa T."/>
            <person name="Otsuki T."/>
            <person name="Sugiyama T."/>
            <person name="Irie R."/>
            <person name="Wakamatsu A."/>
            <person name="Hayashi K."/>
            <person name="Sato H."/>
            <person name="Nagai K."/>
            <person name="Kimura K."/>
            <person name="Makita H."/>
            <person name="Sekine M."/>
            <person name="Obayashi M."/>
            <person name="Nishi T."/>
            <person name="Shibahara T."/>
            <person name="Tanaka T."/>
            <person name="Ishii S."/>
            <person name="Yamamoto J."/>
            <person name="Saito K."/>
            <person name="Kawai Y."/>
            <person name="Isono Y."/>
            <person name="Nakamura Y."/>
            <person name="Nagahari K."/>
            <person name="Murakami K."/>
            <person name="Yasuda T."/>
            <person name="Iwayanagi T."/>
            <person name="Wagatsuma M."/>
            <person name="Shiratori A."/>
            <person name="Sudo H."/>
            <person name="Hosoiri T."/>
            <person name="Kaku Y."/>
            <person name="Kodaira H."/>
            <person name="Kondo H."/>
            <person name="Sugawara M."/>
            <person name="Takahashi M."/>
            <person name="Kanda K."/>
            <person name="Yokoi T."/>
            <person name="Furuya T."/>
            <person name="Kikkawa E."/>
            <person name="Omura Y."/>
            <person name="Abe K."/>
            <person name="Kamihara K."/>
            <person name="Katsuta N."/>
            <person name="Sato K."/>
            <person name="Tanikawa M."/>
            <person name="Yamazaki M."/>
            <person name="Ninomiya K."/>
            <person name="Ishibashi T."/>
            <person name="Yamashita H."/>
            <person name="Murakawa K."/>
            <person name="Fujimori K."/>
            <person name="Tanai H."/>
            <person name="Kimata M."/>
            <person name="Watanabe M."/>
            <person name="Hiraoka S."/>
            <person name="Chiba Y."/>
            <person name="Ishida S."/>
            <person name="Ono Y."/>
            <person name="Takiguchi S."/>
            <person name="Watanabe S."/>
            <person name="Yosida M."/>
            <person name="Hotuta T."/>
            <person name="Kusano J."/>
            <person name="Kanehori K."/>
            <person name="Takahashi-Fujii A."/>
            <person name="Hara H."/>
            <person name="Tanase T.-O."/>
            <person name="Nomura Y."/>
            <person name="Togiya S."/>
            <person name="Komai F."/>
            <person name="Hara R."/>
            <person name="Takeuchi K."/>
            <person name="Arita M."/>
            <person name="Imose N."/>
            <person name="Musashino K."/>
            <person name="Yuuki H."/>
            <person name="Oshima A."/>
            <person name="Sasaki N."/>
            <person name="Aotsuka S."/>
            <person name="Yoshikawa Y."/>
            <person name="Matsunawa H."/>
            <person name="Ichihara T."/>
            <person name="Shiohata N."/>
            <person name="Sano S."/>
            <person name="Moriya S."/>
            <person name="Momiyama H."/>
            <person name="Satoh N."/>
            <person name="Takami S."/>
            <person name="Terashima Y."/>
            <person name="Suzuki O."/>
            <person name="Nakagawa S."/>
            <person name="Senoh A."/>
            <person name="Mizoguchi H."/>
            <person name="Goto Y."/>
            <person name="Shimizu F."/>
            <person name="Wakebe H."/>
            <person name="Hishigaki H."/>
            <person name="Watanabe T."/>
            <person name="Sugiyama A."/>
            <person name="Takemoto M."/>
            <person name="Kawakami B."/>
            <person name="Yamazaki M."/>
            <person name="Watanabe K."/>
            <person name="Kumagai A."/>
            <person name="Itakura S."/>
            <person name="Fukuzumi Y."/>
            <person name="Fujimori Y."/>
            <person name="Komiyama M."/>
            <person name="Tashiro H."/>
            <person name="Tanigami A."/>
            <person name="Fujiwara T."/>
            <person name="Ono T."/>
            <person name="Yamada K."/>
            <person name="Fujii Y."/>
            <person name="Ozaki K."/>
            <person name="Hirao M."/>
            <person name="Ohmori Y."/>
            <person name="Kawabata A."/>
            <person name="Hikiji T."/>
            <person name="Kobatake N."/>
            <person name="Inagaki H."/>
            <person name="Ikema Y."/>
            <person name="Okamoto S."/>
            <person name="Okitani R."/>
            <person name="Kawakami T."/>
            <person name="Noguchi S."/>
            <person name="Itoh T."/>
            <person name="Shigeta K."/>
            <person name="Senba T."/>
            <person name="Matsumura K."/>
            <person name="Nakajima Y."/>
            <person name="Mizuno T."/>
            <person name="Morinaga M."/>
            <person name="Sasaki M."/>
            <person name="Togashi T."/>
            <person name="Oyama M."/>
            <person name="Hata H."/>
            <person name="Watanabe M."/>
            <person name="Komatsu T."/>
            <person name="Mizushima-Sugano J."/>
            <person name="Satoh T."/>
            <person name="Shirai Y."/>
            <person name="Takahashi Y."/>
            <person name="Nakagawa K."/>
            <person name="Okumura K."/>
            <person name="Nagase T."/>
            <person name="Nomura N."/>
            <person name="Kikuchi H."/>
            <person name="Masuho Y."/>
            <person name="Yamashita R."/>
            <person name="Nakai K."/>
            <person name="Yada T."/>
            <person name="Nakamura Y."/>
            <person name="Ohara O."/>
            <person name="Isogai T."/>
            <person name="Sugano S."/>
        </authorList>
    </citation>
    <scope>NUCLEOTIDE SEQUENCE [LARGE SCALE MRNA] (ISOFORMS 1 AND 2)</scope>
    <source>
        <tissue>Thymus</tissue>
    </source>
</reference>
<reference key="3">
    <citation type="journal article" date="2007" name="BMC Genomics">
        <title>The full-ORF clone resource of the German cDNA consortium.</title>
        <authorList>
            <person name="Bechtel S."/>
            <person name="Rosenfelder H."/>
            <person name="Duda A."/>
            <person name="Schmidt C.P."/>
            <person name="Ernst U."/>
            <person name="Wellenreuther R."/>
            <person name="Mehrle A."/>
            <person name="Schuster C."/>
            <person name="Bahr A."/>
            <person name="Bloecker H."/>
            <person name="Heubner D."/>
            <person name="Hoerlein A."/>
            <person name="Michel G."/>
            <person name="Wedler H."/>
            <person name="Koehrer K."/>
            <person name="Ottenwaelder B."/>
            <person name="Poustka A."/>
            <person name="Wiemann S."/>
            <person name="Schupp I."/>
        </authorList>
    </citation>
    <scope>NUCLEOTIDE SEQUENCE [LARGE SCALE MRNA] (ISOFORM 1)</scope>
    <source>
        <tissue>Retina</tissue>
    </source>
</reference>
<reference key="4">
    <citation type="submission" date="2001-06" db="EMBL/GenBank/DDBJ databases">
        <authorList>
            <consortium name="SeattleSNPs variation discovery resource"/>
        </authorList>
    </citation>
    <scope>NUCLEOTIDE SEQUENCE [GENOMIC DNA]</scope>
    <scope>VARIANTS SER-15; VAL-177 AND ASP-250</scope>
</reference>
<reference key="5">
    <citation type="journal article" date="2004" name="Nature">
        <title>The DNA sequence and comparative analysis of human chromosome 5.</title>
        <authorList>
            <person name="Schmutz J."/>
            <person name="Martin J."/>
            <person name="Terry A."/>
            <person name="Couronne O."/>
            <person name="Grimwood J."/>
            <person name="Lowry S."/>
            <person name="Gordon L.A."/>
            <person name="Scott D."/>
            <person name="Xie G."/>
            <person name="Huang W."/>
            <person name="Hellsten U."/>
            <person name="Tran-Gyamfi M."/>
            <person name="She X."/>
            <person name="Prabhakar S."/>
            <person name="Aerts A."/>
            <person name="Altherr M."/>
            <person name="Bajorek E."/>
            <person name="Black S."/>
            <person name="Branscomb E."/>
            <person name="Caoile C."/>
            <person name="Challacombe J.F."/>
            <person name="Chan Y.M."/>
            <person name="Denys M."/>
            <person name="Detter J.C."/>
            <person name="Escobar J."/>
            <person name="Flowers D."/>
            <person name="Fotopulos D."/>
            <person name="Glavina T."/>
            <person name="Gomez M."/>
            <person name="Gonzales E."/>
            <person name="Goodstein D."/>
            <person name="Grigoriev I."/>
            <person name="Groza M."/>
            <person name="Hammon N."/>
            <person name="Hawkins T."/>
            <person name="Haydu L."/>
            <person name="Israni S."/>
            <person name="Jett J."/>
            <person name="Kadner K."/>
            <person name="Kimball H."/>
            <person name="Kobayashi A."/>
            <person name="Lopez F."/>
            <person name="Lou Y."/>
            <person name="Martinez D."/>
            <person name="Medina C."/>
            <person name="Morgan J."/>
            <person name="Nandkeshwar R."/>
            <person name="Noonan J.P."/>
            <person name="Pitluck S."/>
            <person name="Pollard M."/>
            <person name="Predki P."/>
            <person name="Priest J."/>
            <person name="Ramirez L."/>
            <person name="Retterer J."/>
            <person name="Rodriguez A."/>
            <person name="Rogers S."/>
            <person name="Salamov A."/>
            <person name="Salazar A."/>
            <person name="Thayer N."/>
            <person name="Tice H."/>
            <person name="Tsai M."/>
            <person name="Ustaszewska A."/>
            <person name="Vo N."/>
            <person name="Wheeler J."/>
            <person name="Wu K."/>
            <person name="Yang J."/>
            <person name="Dickson M."/>
            <person name="Cheng J.-F."/>
            <person name="Eichler E.E."/>
            <person name="Olsen A."/>
            <person name="Pennacchio L.A."/>
            <person name="Rokhsar D.S."/>
            <person name="Richardson P."/>
            <person name="Lucas S.M."/>
            <person name="Myers R.M."/>
            <person name="Rubin E.M."/>
        </authorList>
    </citation>
    <scope>NUCLEOTIDE SEQUENCE [LARGE SCALE GENOMIC DNA]</scope>
</reference>
<reference key="6">
    <citation type="submission" date="2005-07" db="EMBL/GenBank/DDBJ databases">
        <authorList>
            <person name="Mural R.J."/>
            <person name="Istrail S."/>
            <person name="Sutton G.G."/>
            <person name="Florea L."/>
            <person name="Halpern A.L."/>
            <person name="Mobarry C.M."/>
            <person name="Lippert R."/>
            <person name="Walenz B."/>
            <person name="Shatkay H."/>
            <person name="Dew I."/>
            <person name="Miller J.R."/>
            <person name="Flanigan M.J."/>
            <person name="Edwards N.J."/>
            <person name="Bolanos R."/>
            <person name="Fasulo D."/>
            <person name="Halldorsson B.V."/>
            <person name="Hannenhalli S."/>
            <person name="Turner R."/>
            <person name="Yooseph S."/>
            <person name="Lu F."/>
            <person name="Nusskern D.R."/>
            <person name="Shue B.C."/>
            <person name="Zheng X.H."/>
            <person name="Zhong F."/>
            <person name="Delcher A.L."/>
            <person name="Huson D.H."/>
            <person name="Kravitz S.A."/>
            <person name="Mouchard L."/>
            <person name="Reinert K."/>
            <person name="Remington K.A."/>
            <person name="Clark A.G."/>
            <person name="Waterman M.S."/>
            <person name="Eichler E.E."/>
            <person name="Adams M.D."/>
            <person name="Hunkapiller M.W."/>
            <person name="Myers E.W."/>
            <person name="Venter J.C."/>
        </authorList>
    </citation>
    <scope>NUCLEOTIDE SEQUENCE [LARGE SCALE GENOMIC DNA]</scope>
</reference>
<reference key="7">
    <citation type="journal article" date="2004" name="Genome Res.">
        <title>The status, quality, and expansion of the NIH full-length cDNA project: the Mammalian Gene Collection (MGC).</title>
        <authorList>
            <consortium name="The MGC Project Team"/>
        </authorList>
    </citation>
    <scope>NUCLEOTIDE SEQUENCE [LARGE SCALE MRNA] (ISOFORM 1)</scope>
</reference>
<reference key="8">
    <citation type="journal article" date="1998" name="J. Biol. Chem.">
        <title>The human proteinase-activated receptor-3 (PAR-3) gene. Identification within a PAR gene cluster and characterization in vascular endothelial cells and platelets.</title>
        <authorList>
            <person name="Schmidt V.A."/>
            <person name="Nierman W.C."/>
            <person name="Maglott D.R."/>
            <person name="Cupit L.D."/>
            <person name="Moskowitz K.A."/>
            <person name="Wainer J.A."/>
            <person name="Bahou W.F."/>
        </authorList>
    </citation>
    <scope>TISSUE SPECIFICITY</scope>
</reference>
<reference key="9">
    <citation type="journal article" date="1999" name="J. Clin. Invest.">
        <title>Protease-activated receptors 1 and 4 mediate activation of human platelets by thrombin.</title>
        <authorList>
            <person name="Kahn M.L."/>
            <person name="Nakanishi-Matsui M."/>
            <person name="Shapiro M.J."/>
            <person name="Ishihara H."/>
            <person name="Coughlin S.R."/>
        </authorList>
    </citation>
    <scope>FUNCTION</scope>
</reference>
<reference key="10">
    <citation type="journal article" date="2006" name="Biochem. Biophys. Res. Commun.">
        <title>Two forms of human Inscuteable-related protein that links Par3 to the Pins homologues LGN and AGS3.</title>
        <authorList>
            <person name="Izaki T."/>
            <person name="Kamakura S."/>
            <person name="Kohjima M."/>
            <person name="Sumimoto H."/>
        </authorList>
    </citation>
    <scope>INTERACTION WITH INSC</scope>
</reference>
<accession>O00254</accession>
<accession>B2R754</accession>
<accession>B4DQ13</accession>
<accession>Q52M68</accession>
<accession>Q7Z3W3</accession>
<evidence type="ECO:0000250" key="1"/>
<evidence type="ECO:0000255" key="2"/>
<evidence type="ECO:0000255" key="3">
    <source>
        <dbReference type="PROSITE-ProRule" id="PRU00521"/>
    </source>
</evidence>
<evidence type="ECO:0000269" key="4">
    <source>
    </source>
</evidence>
<evidence type="ECO:0000269" key="5">
    <source>
    </source>
</evidence>
<evidence type="ECO:0000269" key="6">
    <source>
    </source>
</evidence>
<evidence type="ECO:0000269" key="7">
    <source>
    </source>
</evidence>
<evidence type="ECO:0000269" key="8">
    <source ref="4"/>
</evidence>
<evidence type="ECO:0000303" key="9">
    <source>
    </source>
</evidence>
<evidence type="ECO:0000305" key="10"/>
<gene>
    <name type="primary">F2RL2</name>
    <name type="synonym">PAR3</name>
</gene>
<name>PAR3_HUMAN</name>
<protein>
    <recommendedName>
        <fullName>Proteinase-activated receptor 3</fullName>
        <shortName>PAR-3</shortName>
    </recommendedName>
    <alternativeName>
        <fullName>Coagulation factor II receptor-like 2</fullName>
    </alternativeName>
    <alternativeName>
        <fullName>Thrombin receptor-like 2</fullName>
    </alternativeName>
</protein>